<organism>
    <name type="scientific">Bacillus subtilis (strain 168)</name>
    <dbReference type="NCBI Taxonomy" id="224308"/>
    <lineage>
        <taxon>Bacteria</taxon>
        <taxon>Bacillati</taxon>
        <taxon>Bacillota</taxon>
        <taxon>Bacilli</taxon>
        <taxon>Bacillales</taxon>
        <taxon>Bacillaceae</taxon>
        <taxon>Bacillus</taxon>
    </lineage>
</organism>
<accession>P37474</accession>
<name>MFD_BACSU</name>
<sequence>MDNIQTFIKESDDFKSIINGLHEGLKEQLLAGLSGSARSVFTSALANETNKPIFLITHNLYQAQKVTDDLTSLLEDRSVLLYPVNELISSEIAVASPELRAQRLDVINRLTNGEAPIVVAPVAAIRRMLPPVEVWKSSQMLIQVGHDIEPDQLASRLVEVGYERSDMVSAPGEFSIRGGIIDIYPLTSENPVRIELFDTEVDSIRSFNSDDQRSIETLTSINIGPAKELIIRPEEKARAMEKIDSGLAASLKKLKADKQKEILHANISHDKERLSEGQTDQELVKYLSYFYEKPASLLDYTPDNTLLILDEVSRIHEMEEQLQKEEAEFITNLLEEGKILHDIRLSFSFQKIVAEQKRPLLYYSLFLRHVHHTSPQNIVNVSGRQMQSFHGQMNVLAGEMERFKKSNFTVVFLGANKERTQKLSSVLADYDIEAAMTDSKKALVQGQVYIMEGELQSGFELPLMKLAVITEEELFKNRVKKKPRKQKLTNAERIKSYSELQIGDYVVHINHGIGKYLGIETLEINGIHKDYLNIHYQGSDKLYVPVEQIDQVQKYVGSEGKEPKLYKLGGSEWKRVKKKVETSVQDIADDLIKLYAEREASKGYAFSPDHEMQREFESAFPYQETEDQLRSIHEIKKDMERERPMDRLLCGDVGYGKTEVAIRAAFKAIGDGKQVALLVPTTILAQQHYETIKERFQDYPINIGLLSRFRTRKEANETIKGLKNGTVDIVIGTHRLLSKDVVYKDLGLLIIDEEQRFGVTHKEKIKQIKANVDVLTLTATPIPRTLHMSMLGVRDLSVIETPPENRFPVQTYVVEYNGALVREAIERELARGGQVYFLYNRVEDIERKADEISMLVPDAKVAYAHGKMTENELETVMLSFLEGESDVLVSTTIIETGVDIPNVNTLIVFDADKMGLSQLYQLRGRVGRSNRVAYAYFTYRRDKVLTEVAEKRLQAIKEFTELGSGFKIAMRDLTIRGAGNLLGAQQHGFIDSVGFDLYSQMLKEAIEERKGDTAKTEQFETEIDVELDAYIPETYIQDGKQKIDMYKRFRSVATIEEKNELQDEMIDRFGNYPKEVEYLFTVAEMKVYARQERVELIKQDKDAVRLTISEEASAEIDGQKLFELGNQYGRQIGLGMEGKKLKISIQTKGRSADEWLDTVLGMLKGLKDVKKQTISST</sequence>
<proteinExistence type="inferred from homology"/>
<protein>
    <recommendedName>
        <fullName evidence="1">Transcription-repair-coupling factor</fullName>
        <shortName evidence="1">TRCF</shortName>
        <ecNumber evidence="1">3.6.4.-</ecNumber>
    </recommendedName>
</protein>
<reference key="1">
    <citation type="journal article" date="1994" name="DNA Res.">
        <title>Systematic sequencing of the 180 kilobase region of the Bacillus subtilis chromosome containing the replication origin.</title>
        <authorList>
            <person name="Ogasawara N."/>
            <person name="Nakai S."/>
            <person name="Yoshikawa H."/>
        </authorList>
    </citation>
    <scope>NUCLEOTIDE SEQUENCE [GENOMIC DNA]</scope>
    <source>
        <strain>168</strain>
    </source>
</reference>
<reference key="2">
    <citation type="journal article" date="1997" name="Nature">
        <title>The complete genome sequence of the Gram-positive bacterium Bacillus subtilis.</title>
        <authorList>
            <person name="Kunst F."/>
            <person name="Ogasawara N."/>
            <person name="Moszer I."/>
            <person name="Albertini A.M."/>
            <person name="Alloni G."/>
            <person name="Azevedo V."/>
            <person name="Bertero M.G."/>
            <person name="Bessieres P."/>
            <person name="Bolotin A."/>
            <person name="Borchert S."/>
            <person name="Borriss R."/>
            <person name="Boursier L."/>
            <person name="Brans A."/>
            <person name="Braun M."/>
            <person name="Brignell S.C."/>
            <person name="Bron S."/>
            <person name="Brouillet S."/>
            <person name="Bruschi C.V."/>
            <person name="Caldwell B."/>
            <person name="Capuano V."/>
            <person name="Carter N.M."/>
            <person name="Choi S.-K."/>
            <person name="Codani J.-J."/>
            <person name="Connerton I.F."/>
            <person name="Cummings N.J."/>
            <person name="Daniel R.A."/>
            <person name="Denizot F."/>
            <person name="Devine K.M."/>
            <person name="Duesterhoeft A."/>
            <person name="Ehrlich S.D."/>
            <person name="Emmerson P.T."/>
            <person name="Entian K.-D."/>
            <person name="Errington J."/>
            <person name="Fabret C."/>
            <person name="Ferrari E."/>
            <person name="Foulger D."/>
            <person name="Fritz C."/>
            <person name="Fujita M."/>
            <person name="Fujita Y."/>
            <person name="Fuma S."/>
            <person name="Galizzi A."/>
            <person name="Galleron N."/>
            <person name="Ghim S.-Y."/>
            <person name="Glaser P."/>
            <person name="Goffeau A."/>
            <person name="Golightly E.J."/>
            <person name="Grandi G."/>
            <person name="Guiseppi G."/>
            <person name="Guy B.J."/>
            <person name="Haga K."/>
            <person name="Haiech J."/>
            <person name="Harwood C.R."/>
            <person name="Henaut A."/>
            <person name="Hilbert H."/>
            <person name="Holsappel S."/>
            <person name="Hosono S."/>
            <person name="Hullo M.-F."/>
            <person name="Itaya M."/>
            <person name="Jones L.-M."/>
            <person name="Joris B."/>
            <person name="Karamata D."/>
            <person name="Kasahara Y."/>
            <person name="Klaerr-Blanchard M."/>
            <person name="Klein C."/>
            <person name="Kobayashi Y."/>
            <person name="Koetter P."/>
            <person name="Koningstein G."/>
            <person name="Krogh S."/>
            <person name="Kumano M."/>
            <person name="Kurita K."/>
            <person name="Lapidus A."/>
            <person name="Lardinois S."/>
            <person name="Lauber J."/>
            <person name="Lazarevic V."/>
            <person name="Lee S.-M."/>
            <person name="Levine A."/>
            <person name="Liu H."/>
            <person name="Masuda S."/>
            <person name="Mauel C."/>
            <person name="Medigue C."/>
            <person name="Medina N."/>
            <person name="Mellado R.P."/>
            <person name="Mizuno M."/>
            <person name="Moestl D."/>
            <person name="Nakai S."/>
            <person name="Noback M."/>
            <person name="Noone D."/>
            <person name="O'Reilly M."/>
            <person name="Ogawa K."/>
            <person name="Ogiwara A."/>
            <person name="Oudega B."/>
            <person name="Park S.-H."/>
            <person name="Parro V."/>
            <person name="Pohl T.M."/>
            <person name="Portetelle D."/>
            <person name="Porwollik S."/>
            <person name="Prescott A.M."/>
            <person name="Presecan E."/>
            <person name="Pujic P."/>
            <person name="Purnelle B."/>
            <person name="Rapoport G."/>
            <person name="Rey M."/>
            <person name="Reynolds S."/>
            <person name="Rieger M."/>
            <person name="Rivolta C."/>
            <person name="Rocha E."/>
            <person name="Roche B."/>
            <person name="Rose M."/>
            <person name="Sadaie Y."/>
            <person name="Sato T."/>
            <person name="Scanlan E."/>
            <person name="Schleich S."/>
            <person name="Schroeter R."/>
            <person name="Scoffone F."/>
            <person name="Sekiguchi J."/>
            <person name="Sekowska A."/>
            <person name="Seror S.J."/>
            <person name="Serror P."/>
            <person name="Shin B.-S."/>
            <person name="Soldo B."/>
            <person name="Sorokin A."/>
            <person name="Tacconi E."/>
            <person name="Takagi T."/>
            <person name="Takahashi H."/>
            <person name="Takemaru K."/>
            <person name="Takeuchi M."/>
            <person name="Tamakoshi A."/>
            <person name="Tanaka T."/>
            <person name="Terpstra P."/>
            <person name="Tognoni A."/>
            <person name="Tosato V."/>
            <person name="Uchiyama S."/>
            <person name="Vandenbol M."/>
            <person name="Vannier F."/>
            <person name="Vassarotti A."/>
            <person name="Viari A."/>
            <person name="Wambutt R."/>
            <person name="Wedler E."/>
            <person name="Wedler H."/>
            <person name="Weitzenegger T."/>
            <person name="Winters P."/>
            <person name="Wipat A."/>
            <person name="Yamamoto H."/>
            <person name="Yamane K."/>
            <person name="Yasumoto K."/>
            <person name="Yata K."/>
            <person name="Yoshida K."/>
            <person name="Yoshikawa H.-F."/>
            <person name="Zumstein E."/>
            <person name="Yoshikawa H."/>
            <person name="Danchin A."/>
        </authorList>
    </citation>
    <scope>NUCLEOTIDE SEQUENCE [LARGE SCALE GENOMIC DNA]</scope>
    <source>
        <strain>168</strain>
    </source>
</reference>
<reference key="3">
    <citation type="journal article" date="2020" name="Front. Mol. Biosci.">
        <title>Bacillus subtilis PcrA Couples DNA Replication, Transcription, Recombination and Segregation.</title>
        <authorList>
            <person name="Moreno-Del Alamo M."/>
            <person name="Torres R."/>
            <person name="Manfredi C."/>
            <person name="Ruiz-Maso J.A."/>
            <person name="Del Solar G."/>
            <person name="Alonso J.C."/>
        </authorList>
    </citation>
    <scope>FUNCTION</scope>
    <scope>DISRUPTION PHENOTYPE</scope>
    <source>
        <strain>168 / YB886 / BG214</strain>
    </source>
</reference>
<keyword id="KW-0067">ATP-binding</keyword>
<keyword id="KW-0963">Cytoplasm</keyword>
<keyword id="KW-0227">DNA damage</keyword>
<keyword id="KW-0234">DNA repair</keyword>
<keyword id="KW-0238">DNA-binding</keyword>
<keyword id="KW-0347">Helicase</keyword>
<keyword id="KW-0378">Hydrolase</keyword>
<keyword id="KW-0547">Nucleotide-binding</keyword>
<keyword id="KW-1185">Reference proteome</keyword>
<feature type="chain" id="PRO_0000102162" description="Transcription-repair-coupling factor">
    <location>
        <begin position="1"/>
        <end position="1177"/>
    </location>
</feature>
<feature type="domain" description="Helicase ATP-binding" evidence="1">
    <location>
        <begin position="638"/>
        <end position="799"/>
    </location>
</feature>
<feature type="domain" description="Helicase C-terminal" evidence="1">
    <location>
        <begin position="820"/>
        <end position="974"/>
    </location>
</feature>
<feature type="short sequence motif" description="DEEQ box">
    <location>
        <begin position="752"/>
        <end position="755"/>
    </location>
</feature>
<feature type="binding site" evidence="1">
    <location>
        <begin position="651"/>
        <end position="658"/>
    </location>
    <ligand>
        <name>ATP</name>
        <dbReference type="ChEBI" id="CHEBI:30616"/>
    </ligand>
</feature>
<dbReference type="EC" id="3.6.4.-" evidence="1"/>
<dbReference type="EMBL" id="D26185">
    <property type="protein sequence ID" value="BAA05290.1"/>
    <property type="molecule type" value="Genomic_DNA"/>
</dbReference>
<dbReference type="EMBL" id="AL009126">
    <property type="protein sequence ID" value="CAB11831.1"/>
    <property type="molecule type" value="Genomic_DNA"/>
</dbReference>
<dbReference type="PIR" id="S66085">
    <property type="entry name" value="S66085"/>
</dbReference>
<dbReference type="RefSeq" id="NP_387936.1">
    <property type="nucleotide sequence ID" value="NC_000964.3"/>
</dbReference>
<dbReference type="RefSeq" id="WP_003243453.1">
    <property type="nucleotide sequence ID" value="NZ_OZ025638.1"/>
</dbReference>
<dbReference type="SMR" id="P37474"/>
<dbReference type="FunCoup" id="P37474">
    <property type="interactions" value="545"/>
</dbReference>
<dbReference type="STRING" id="224308.BSU00550"/>
<dbReference type="PaxDb" id="224308-BSU00550"/>
<dbReference type="DNASU" id="936653"/>
<dbReference type="EnsemblBacteria" id="CAB11831">
    <property type="protein sequence ID" value="CAB11831"/>
    <property type="gene ID" value="BSU_00550"/>
</dbReference>
<dbReference type="GeneID" id="936653"/>
<dbReference type="KEGG" id="bsu:BSU00550"/>
<dbReference type="PATRIC" id="fig|224308.179.peg.55"/>
<dbReference type="eggNOG" id="COG1197">
    <property type="taxonomic scope" value="Bacteria"/>
</dbReference>
<dbReference type="InParanoid" id="P37474"/>
<dbReference type="OrthoDB" id="9804325at2"/>
<dbReference type="PhylomeDB" id="P37474"/>
<dbReference type="BioCyc" id="BSUB:BSU00550-MONOMER"/>
<dbReference type="Proteomes" id="UP000001570">
    <property type="component" value="Chromosome"/>
</dbReference>
<dbReference type="GO" id="GO:0005737">
    <property type="term" value="C:cytoplasm"/>
    <property type="evidence" value="ECO:0007669"/>
    <property type="project" value="UniProtKB-SubCell"/>
</dbReference>
<dbReference type="GO" id="GO:0005524">
    <property type="term" value="F:ATP binding"/>
    <property type="evidence" value="ECO:0007669"/>
    <property type="project" value="UniProtKB-UniRule"/>
</dbReference>
<dbReference type="GO" id="GO:0003684">
    <property type="term" value="F:damaged DNA binding"/>
    <property type="evidence" value="ECO:0007669"/>
    <property type="project" value="InterPro"/>
</dbReference>
<dbReference type="GO" id="GO:0003677">
    <property type="term" value="F:DNA binding"/>
    <property type="evidence" value="ECO:0000318"/>
    <property type="project" value="GO_Central"/>
</dbReference>
<dbReference type="GO" id="GO:0015616">
    <property type="term" value="F:DNA translocase activity"/>
    <property type="evidence" value="ECO:0000318"/>
    <property type="project" value="GO_Central"/>
</dbReference>
<dbReference type="GO" id="GO:0004386">
    <property type="term" value="F:helicase activity"/>
    <property type="evidence" value="ECO:0007669"/>
    <property type="project" value="UniProtKB-KW"/>
</dbReference>
<dbReference type="GO" id="GO:0016787">
    <property type="term" value="F:hydrolase activity"/>
    <property type="evidence" value="ECO:0007669"/>
    <property type="project" value="UniProtKB-KW"/>
</dbReference>
<dbReference type="GO" id="GO:0043175">
    <property type="term" value="F:RNA polymerase core enzyme binding"/>
    <property type="evidence" value="ECO:0000318"/>
    <property type="project" value="GO_Central"/>
</dbReference>
<dbReference type="GO" id="GO:0006355">
    <property type="term" value="P:regulation of DNA-templated transcription"/>
    <property type="evidence" value="ECO:0000318"/>
    <property type="project" value="GO_Central"/>
</dbReference>
<dbReference type="GO" id="GO:0000716">
    <property type="term" value="P:transcription-coupled nucleotide-excision repair, DNA damage recognition"/>
    <property type="evidence" value="ECO:0000318"/>
    <property type="project" value="GO_Central"/>
</dbReference>
<dbReference type="CDD" id="cd17991">
    <property type="entry name" value="DEXHc_TRCF"/>
    <property type="match status" value="1"/>
</dbReference>
<dbReference type="CDD" id="cd18810">
    <property type="entry name" value="SF2_C_TRCF"/>
    <property type="match status" value="1"/>
</dbReference>
<dbReference type="FunFam" id="3.40.50.300:FF:000546">
    <property type="entry name" value="Transcription-repair-coupling factor"/>
    <property type="match status" value="1"/>
</dbReference>
<dbReference type="Gene3D" id="2.40.10.170">
    <property type="match status" value="1"/>
</dbReference>
<dbReference type="Gene3D" id="3.40.50.11140">
    <property type="match status" value="1"/>
</dbReference>
<dbReference type="Gene3D" id="3.40.50.11180">
    <property type="match status" value="1"/>
</dbReference>
<dbReference type="Gene3D" id="3.40.50.300">
    <property type="entry name" value="P-loop containing nucleotide triphosphate hydrolases"/>
    <property type="match status" value="2"/>
</dbReference>
<dbReference type="Gene3D" id="3.30.2060.10">
    <property type="entry name" value="Penicillin-binding protein 1b domain"/>
    <property type="match status" value="1"/>
</dbReference>
<dbReference type="Gene3D" id="3.90.1150.50">
    <property type="entry name" value="Transcription-repair-coupling factor, D7 domain"/>
    <property type="match status" value="1"/>
</dbReference>
<dbReference type="HAMAP" id="MF_00969">
    <property type="entry name" value="TRCF"/>
    <property type="match status" value="1"/>
</dbReference>
<dbReference type="InterPro" id="IPR003711">
    <property type="entry name" value="CarD-like/TRCF_RID"/>
</dbReference>
<dbReference type="InterPro" id="IPR036101">
    <property type="entry name" value="CarD-like/TRCF_RID_sf"/>
</dbReference>
<dbReference type="InterPro" id="IPR011545">
    <property type="entry name" value="DEAD/DEAH_box_helicase_dom"/>
</dbReference>
<dbReference type="InterPro" id="IPR014001">
    <property type="entry name" value="Helicase_ATP-bd"/>
</dbReference>
<dbReference type="InterPro" id="IPR001650">
    <property type="entry name" value="Helicase_C-like"/>
</dbReference>
<dbReference type="InterPro" id="IPR004576">
    <property type="entry name" value="Mfd"/>
</dbReference>
<dbReference type="InterPro" id="IPR048635">
    <property type="entry name" value="MFD_D3"/>
</dbReference>
<dbReference type="InterPro" id="IPR027417">
    <property type="entry name" value="P-loop_NTPase"/>
</dbReference>
<dbReference type="InterPro" id="IPR047112">
    <property type="entry name" value="RecG/Mfd"/>
</dbReference>
<dbReference type="InterPro" id="IPR037235">
    <property type="entry name" value="TRCF-like_C_D7"/>
</dbReference>
<dbReference type="InterPro" id="IPR005118">
    <property type="entry name" value="TRCF_C"/>
</dbReference>
<dbReference type="InterPro" id="IPR041471">
    <property type="entry name" value="UvrB_inter"/>
</dbReference>
<dbReference type="NCBIfam" id="TIGR00580">
    <property type="entry name" value="mfd"/>
    <property type="match status" value="1"/>
</dbReference>
<dbReference type="PANTHER" id="PTHR47964">
    <property type="entry name" value="ATP-DEPENDENT DNA HELICASE HOMOLOG RECG, CHLOROPLASTIC"/>
    <property type="match status" value="1"/>
</dbReference>
<dbReference type="PANTHER" id="PTHR47964:SF1">
    <property type="entry name" value="ATP-DEPENDENT DNA HELICASE HOMOLOG RECG, CHLOROPLASTIC"/>
    <property type="match status" value="1"/>
</dbReference>
<dbReference type="Pfam" id="PF02559">
    <property type="entry name" value="CarD_TRCF_RID"/>
    <property type="match status" value="1"/>
</dbReference>
<dbReference type="Pfam" id="PF00270">
    <property type="entry name" value="DEAD"/>
    <property type="match status" value="1"/>
</dbReference>
<dbReference type="Pfam" id="PF00271">
    <property type="entry name" value="Helicase_C"/>
    <property type="match status" value="1"/>
</dbReference>
<dbReference type="Pfam" id="PF21132">
    <property type="entry name" value="MFD_D3"/>
    <property type="match status" value="1"/>
</dbReference>
<dbReference type="Pfam" id="PF03461">
    <property type="entry name" value="TRCF"/>
    <property type="match status" value="1"/>
</dbReference>
<dbReference type="Pfam" id="PF17757">
    <property type="entry name" value="UvrB_inter"/>
    <property type="match status" value="1"/>
</dbReference>
<dbReference type="SMART" id="SM01058">
    <property type="entry name" value="CarD_TRCF"/>
    <property type="match status" value="1"/>
</dbReference>
<dbReference type="SMART" id="SM00487">
    <property type="entry name" value="DEXDc"/>
    <property type="match status" value="1"/>
</dbReference>
<dbReference type="SMART" id="SM00490">
    <property type="entry name" value="HELICc"/>
    <property type="match status" value="1"/>
</dbReference>
<dbReference type="SMART" id="SM00982">
    <property type="entry name" value="TRCF"/>
    <property type="match status" value="1"/>
</dbReference>
<dbReference type="SUPFAM" id="SSF141259">
    <property type="entry name" value="CarD-like"/>
    <property type="match status" value="1"/>
</dbReference>
<dbReference type="SUPFAM" id="SSF52540">
    <property type="entry name" value="P-loop containing nucleoside triphosphate hydrolases"/>
    <property type="match status" value="4"/>
</dbReference>
<dbReference type="SUPFAM" id="SSF143517">
    <property type="entry name" value="TRCF domain-like"/>
    <property type="match status" value="1"/>
</dbReference>
<dbReference type="PROSITE" id="PS51192">
    <property type="entry name" value="HELICASE_ATP_BIND_1"/>
    <property type="match status" value="1"/>
</dbReference>
<dbReference type="PROSITE" id="PS51194">
    <property type="entry name" value="HELICASE_CTER"/>
    <property type="match status" value="1"/>
</dbReference>
<evidence type="ECO:0000255" key="1">
    <source>
        <dbReference type="HAMAP-Rule" id="MF_00969"/>
    </source>
</evidence>
<evidence type="ECO:0000269" key="2">
    <source>
    </source>
</evidence>
<evidence type="ECO:0000303" key="3">
    <source>
    </source>
</evidence>
<evidence type="ECO:0000305" key="4">
    <source>
    </source>
</evidence>
<gene>
    <name evidence="1 3" type="primary">mfd</name>
    <name type="ordered locus">BSU00550</name>
</gene>
<comment type="function">
    <text evidence="1 4">Couples transcription and DNA repair by recognizing RNA polymerase (RNAP) stalled at DNA lesions. Mediates ATP-dependent release of RNAP and its truncated transcript from the DNA, and recruitment of nucleotide excision repair machinery to the damaged site. Probably required to repair non-bulky DNA lesions (PubMed:32793628).</text>
</comment>
<comment type="subcellular location">
    <subcellularLocation>
        <location evidence="1">Cytoplasm</location>
    </subcellularLocation>
</comment>
<comment type="disruption phenotype">
    <text evidence="2">No visible phenotype. An mfd deletion suppresses the lethality of pcrA DNA helicase depletion and increases survival of the strain in the presence of H(2)O(2) but not methyl methanesulfonate, although the surviving cells are very small (PubMed:32793628).</text>
</comment>
<comment type="similarity">
    <text evidence="1">In the N-terminal section; belongs to the UvrB family.</text>
</comment>
<comment type="similarity">
    <text evidence="1">In the C-terminal section; belongs to the helicase family. RecG subfamily.</text>
</comment>